<dbReference type="EC" id="4.1.1.31" evidence="1"/>
<dbReference type="EMBL" id="CP000057">
    <property type="protein sequence ID" value="AAX88226.1"/>
    <property type="molecule type" value="Genomic_DNA"/>
</dbReference>
<dbReference type="RefSeq" id="WP_011272456.1">
    <property type="nucleotide sequence ID" value="NC_007146.2"/>
</dbReference>
<dbReference type="SMR" id="Q4QL71"/>
<dbReference type="KEGG" id="hit:NTHI1403"/>
<dbReference type="HOGENOM" id="CLU_006557_2_0_6"/>
<dbReference type="Proteomes" id="UP000002525">
    <property type="component" value="Chromosome"/>
</dbReference>
<dbReference type="GO" id="GO:0005829">
    <property type="term" value="C:cytosol"/>
    <property type="evidence" value="ECO:0007669"/>
    <property type="project" value="TreeGrafter"/>
</dbReference>
<dbReference type="GO" id="GO:0000287">
    <property type="term" value="F:magnesium ion binding"/>
    <property type="evidence" value="ECO:0007669"/>
    <property type="project" value="UniProtKB-UniRule"/>
</dbReference>
<dbReference type="GO" id="GO:0008964">
    <property type="term" value="F:phosphoenolpyruvate carboxylase activity"/>
    <property type="evidence" value="ECO:0007669"/>
    <property type="project" value="UniProtKB-UniRule"/>
</dbReference>
<dbReference type="GO" id="GO:0015977">
    <property type="term" value="P:carbon fixation"/>
    <property type="evidence" value="ECO:0007669"/>
    <property type="project" value="UniProtKB-UniRule"/>
</dbReference>
<dbReference type="GO" id="GO:0006107">
    <property type="term" value="P:oxaloacetate metabolic process"/>
    <property type="evidence" value="ECO:0007669"/>
    <property type="project" value="UniProtKB-UniRule"/>
</dbReference>
<dbReference type="GO" id="GO:0006099">
    <property type="term" value="P:tricarboxylic acid cycle"/>
    <property type="evidence" value="ECO:0007669"/>
    <property type="project" value="InterPro"/>
</dbReference>
<dbReference type="FunFam" id="1.20.1440.90:FF:000002">
    <property type="entry name" value="Phosphoenolpyruvate carboxylase"/>
    <property type="match status" value="1"/>
</dbReference>
<dbReference type="Gene3D" id="1.20.1440.90">
    <property type="entry name" value="Phosphoenolpyruvate/pyruvate domain"/>
    <property type="match status" value="1"/>
</dbReference>
<dbReference type="HAMAP" id="MF_00595">
    <property type="entry name" value="PEPcase_type1"/>
    <property type="match status" value="1"/>
</dbReference>
<dbReference type="InterPro" id="IPR021135">
    <property type="entry name" value="PEP_COase"/>
</dbReference>
<dbReference type="InterPro" id="IPR022805">
    <property type="entry name" value="PEP_COase_bac/pln-type"/>
</dbReference>
<dbReference type="InterPro" id="IPR018129">
    <property type="entry name" value="PEP_COase_Lys_AS"/>
</dbReference>
<dbReference type="InterPro" id="IPR033129">
    <property type="entry name" value="PEPCASE_His_AS"/>
</dbReference>
<dbReference type="InterPro" id="IPR015813">
    <property type="entry name" value="Pyrv/PenolPyrv_kinase-like_dom"/>
</dbReference>
<dbReference type="NCBIfam" id="NF000584">
    <property type="entry name" value="PRK00009.1"/>
    <property type="match status" value="1"/>
</dbReference>
<dbReference type="PANTHER" id="PTHR30523">
    <property type="entry name" value="PHOSPHOENOLPYRUVATE CARBOXYLASE"/>
    <property type="match status" value="1"/>
</dbReference>
<dbReference type="PANTHER" id="PTHR30523:SF6">
    <property type="entry name" value="PHOSPHOENOLPYRUVATE CARBOXYLASE"/>
    <property type="match status" value="1"/>
</dbReference>
<dbReference type="Pfam" id="PF00311">
    <property type="entry name" value="PEPcase"/>
    <property type="match status" value="1"/>
</dbReference>
<dbReference type="PRINTS" id="PR00150">
    <property type="entry name" value="PEPCARBXLASE"/>
</dbReference>
<dbReference type="SUPFAM" id="SSF51621">
    <property type="entry name" value="Phosphoenolpyruvate/pyruvate domain"/>
    <property type="match status" value="1"/>
</dbReference>
<dbReference type="PROSITE" id="PS00781">
    <property type="entry name" value="PEPCASE_1"/>
    <property type="match status" value="1"/>
</dbReference>
<dbReference type="PROSITE" id="PS00393">
    <property type="entry name" value="PEPCASE_2"/>
    <property type="match status" value="1"/>
</dbReference>
<keyword id="KW-0120">Carbon dioxide fixation</keyword>
<keyword id="KW-0456">Lyase</keyword>
<keyword id="KW-0460">Magnesium</keyword>
<gene>
    <name evidence="1" type="primary">ppc</name>
    <name type="ordered locus">NTHI1403</name>
</gene>
<evidence type="ECO:0000255" key="1">
    <source>
        <dbReference type="HAMAP-Rule" id="MF_00595"/>
    </source>
</evidence>
<protein>
    <recommendedName>
        <fullName evidence="1">Phosphoenolpyruvate carboxylase</fullName>
        <shortName evidence="1">PEPC</shortName>
        <shortName evidence="1">PEPCase</shortName>
        <ecNumber evidence="1">4.1.1.31</ecNumber>
    </recommendedName>
</protein>
<name>CAPP_HAEI8</name>
<sequence length="879" mass="100080">MTQEYSTLRNNISMLGRFLGETINDAQGEDILELIENIRKLSRNSRAGDDKARQALLDTLGSISNENIIPVARAFSQFLNLTNIAEQYQTISREHSLAQSSSQSLSELFKRLKEQNASVEEVHKTVEKLLIELVLTAHPTETTRRSLIHKHIEINKCLSKLEHHDLTEKERNIIERLLLRLIAEAWHTNEIRTVRPTPFDEAKWGFAMLENSLWQAVPEFLRQLNETAREFLGYDLPVGLKPVRISSWMGGDRDGNPFVTAQITKKVLYFARWKAADLFLQDISKLADELSMMKCSDEFRDKYGEHLEPYRFVVKNLRNQLTATLAYFDDHLSNRTPRVSESEIILEDNQLWEPLYDCYQSLIQCGMRIIANGSLLDILHRISCFGVTLSQMDIRQESTRHTDAIAEIMRYIGLGDYSQWMEDDKQAFLIRELSSRRPLIPQNWTPSPETKEILDTCKVIAQQKQGVIACYVISMARSASDVLAVHLLLKEAGVPYHIPVVPLFETLEDLDAAEKVMTQLFNVGWYRGVINNRQMVMIGYSDSAKDAGMMAASWAQYRAQEALVNLTEKLGIELTLFHGRGGTIGRGGAPAHAALLSQPPRSLKNGLRVTEQGEMIRFKLGLPAVAVETFDLYASAILEANLLPPPEPKPEWRTIMDELSTISCDIYRGVVRGDKDFVPYFRSATPEQELSKLPLGSRPAKRNPNGGVESLRAIPWIFAWMQNRLMLPAWLGAGAAIRQVIEQGKGDIIHKMCENWPFFSTRIGMLEMVFSKSDTWLSQQYDQRLVKKELWYLGENLRKQLEDDIQTVLSLSHQSELMSDLPWIADSIALRNIYTDPLNLLQVELLHRFRENPEQVNPDVEQALMITITGIAAGMRNTG</sequence>
<proteinExistence type="inferred from homology"/>
<feature type="chain" id="PRO_1000025559" description="Phosphoenolpyruvate carboxylase">
    <location>
        <begin position="1"/>
        <end position="879"/>
    </location>
</feature>
<feature type="active site" evidence="1">
    <location>
        <position position="138"/>
    </location>
</feature>
<feature type="active site" evidence="1">
    <location>
        <position position="545"/>
    </location>
</feature>
<comment type="function">
    <text evidence="1">Forms oxaloacetate, a four-carbon dicarboxylic acid source for the tricarboxylic acid cycle.</text>
</comment>
<comment type="catalytic activity">
    <reaction evidence="1">
        <text>oxaloacetate + phosphate = phosphoenolpyruvate + hydrogencarbonate</text>
        <dbReference type="Rhea" id="RHEA:28370"/>
        <dbReference type="ChEBI" id="CHEBI:16452"/>
        <dbReference type="ChEBI" id="CHEBI:17544"/>
        <dbReference type="ChEBI" id="CHEBI:43474"/>
        <dbReference type="ChEBI" id="CHEBI:58702"/>
        <dbReference type="EC" id="4.1.1.31"/>
    </reaction>
</comment>
<comment type="cofactor">
    <cofactor evidence="1">
        <name>Mg(2+)</name>
        <dbReference type="ChEBI" id="CHEBI:18420"/>
    </cofactor>
</comment>
<comment type="similarity">
    <text evidence="1">Belongs to the PEPCase type 1 family.</text>
</comment>
<reference key="1">
    <citation type="journal article" date="2005" name="J. Bacteriol.">
        <title>Genomic sequence of an otitis media isolate of nontypeable Haemophilus influenzae: comparative study with H. influenzae serotype d, strain KW20.</title>
        <authorList>
            <person name="Harrison A."/>
            <person name="Dyer D.W."/>
            <person name="Gillaspy A."/>
            <person name="Ray W.C."/>
            <person name="Mungur R."/>
            <person name="Carson M.B."/>
            <person name="Zhong H."/>
            <person name="Gipson J."/>
            <person name="Gipson M."/>
            <person name="Johnson L.S."/>
            <person name="Lewis L."/>
            <person name="Bakaletz L.O."/>
            <person name="Munson R.S. Jr."/>
        </authorList>
    </citation>
    <scope>NUCLEOTIDE SEQUENCE [LARGE SCALE GENOMIC DNA]</scope>
    <source>
        <strain>86-028NP</strain>
    </source>
</reference>
<accession>Q4QL71</accession>
<organism>
    <name type="scientific">Haemophilus influenzae (strain 86-028NP)</name>
    <dbReference type="NCBI Taxonomy" id="281310"/>
    <lineage>
        <taxon>Bacteria</taxon>
        <taxon>Pseudomonadati</taxon>
        <taxon>Pseudomonadota</taxon>
        <taxon>Gammaproteobacteria</taxon>
        <taxon>Pasteurellales</taxon>
        <taxon>Pasteurellaceae</taxon>
        <taxon>Haemophilus</taxon>
    </lineage>
</organism>